<organism>
    <name type="scientific">Pectobacterium carotovorum subsp. carotovorum (strain PC1)</name>
    <dbReference type="NCBI Taxonomy" id="561230"/>
    <lineage>
        <taxon>Bacteria</taxon>
        <taxon>Pseudomonadati</taxon>
        <taxon>Pseudomonadota</taxon>
        <taxon>Gammaproteobacteria</taxon>
        <taxon>Enterobacterales</taxon>
        <taxon>Pectobacteriaceae</taxon>
        <taxon>Pectobacterium</taxon>
    </lineage>
</organism>
<dbReference type="EC" id="2.7.7.23" evidence="1"/>
<dbReference type="EC" id="2.3.1.157" evidence="1"/>
<dbReference type="EMBL" id="CP001657">
    <property type="protein sequence ID" value="ACT15274.1"/>
    <property type="molecule type" value="Genomic_DNA"/>
</dbReference>
<dbReference type="RefSeq" id="WP_015842334.1">
    <property type="nucleotide sequence ID" value="NC_012917.1"/>
</dbReference>
<dbReference type="SMR" id="C6DJH5"/>
<dbReference type="STRING" id="561230.PC1_4260"/>
<dbReference type="KEGG" id="pct:PC1_4260"/>
<dbReference type="eggNOG" id="COG1207">
    <property type="taxonomic scope" value="Bacteria"/>
</dbReference>
<dbReference type="HOGENOM" id="CLU_029499_15_2_6"/>
<dbReference type="OrthoDB" id="9775031at2"/>
<dbReference type="UniPathway" id="UPA00113">
    <property type="reaction ID" value="UER00532"/>
</dbReference>
<dbReference type="UniPathway" id="UPA00113">
    <property type="reaction ID" value="UER00533"/>
</dbReference>
<dbReference type="UniPathway" id="UPA00973"/>
<dbReference type="Proteomes" id="UP000002736">
    <property type="component" value="Chromosome"/>
</dbReference>
<dbReference type="GO" id="GO:0005737">
    <property type="term" value="C:cytoplasm"/>
    <property type="evidence" value="ECO:0007669"/>
    <property type="project" value="UniProtKB-SubCell"/>
</dbReference>
<dbReference type="GO" id="GO:0016020">
    <property type="term" value="C:membrane"/>
    <property type="evidence" value="ECO:0007669"/>
    <property type="project" value="GOC"/>
</dbReference>
<dbReference type="GO" id="GO:0019134">
    <property type="term" value="F:glucosamine-1-phosphate N-acetyltransferase activity"/>
    <property type="evidence" value="ECO:0007669"/>
    <property type="project" value="UniProtKB-UniRule"/>
</dbReference>
<dbReference type="GO" id="GO:0000287">
    <property type="term" value="F:magnesium ion binding"/>
    <property type="evidence" value="ECO:0007669"/>
    <property type="project" value="UniProtKB-UniRule"/>
</dbReference>
<dbReference type="GO" id="GO:0003977">
    <property type="term" value="F:UDP-N-acetylglucosamine diphosphorylase activity"/>
    <property type="evidence" value="ECO:0007669"/>
    <property type="project" value="UniProtKB-UniRule"/>
</dbReference>
<dbReference type="GO" id="GO:0000902">
    <property type="term" value="P:cell morphogenesis"/>
    <property type="evidence" value="ECO:0007669"/>
    <property type="project" value="UniProtKB-UniRule"/>
</dbReference>
<dbReference type="GO" id="GO:0071555">
    <property type="term" value="P:cell wall organization"/>
    <property type="evidence" value="ECO:0007669"/>
    <property type="project" value="UniProtKB-KW"/>
</dbReference>
<dbReference type="GO" id="GO:0009245">
    <property type="term" value="P:lipid A biosynthetic process"/>
    <property type="evidence" value="ECO:0007669"/>
    <property type="project" value="UniProtKB-UniRule"/>
</dbReference>
<dbReference type="GO" id="GO:0009252">
    <property type="term" value="P:peptidoglycan biosynthetic process"/>
    <property type="evidence" value="ECO:0007669"/>
    <property type="project" value="UniProtKB-UniRule"/>
</dbReference>
<dbReference type="GO" id="GO:0008360">
    <property type="term" value="P:regulation of cell shape"/>
    <property type="evidence" value="ECO:0007669"/>
    <property type="project" value="UniProtKB-KW"/>
</dbReference>
<dbReference type="GO" id="GO:0006048">
    <property type="term" value="P:UDP-N-acetylglucosamine biosynthetic process"/>
    <property type="evidence" value="ECO:0007669"/>
    <property type="project" value="UniProtKB-UniPathway"/>
</dbReference>
<dbReference type="CDD" id="cd02540">
    <property type="entry name" value="GT2_GlmU_N_bac"/>
    <property type="match status" value="1"/>
</dbReference>
<dbReference type="CDD" id="cd03353">
    <property type="entry name" value="LbH_GlmU_C"/>
    <property type="match status" value="1"/>
</dbReference>
<dbReference type="FunFam" id="2.160.10.10:FF:000011">
    <property type="entry name" value="Bifunctional protein GlmU"/>
    <property type="match status" value="1"/>
</dbReference>
<dbReference type="FunFam" id="3.90.550.10:FF:000006">
    <property type="entry name" value="Bifunctional protein GlmU"/>
    <property type="match status" value="1"/>
</dbReference>
<dbReference type="Gene3D" id="2.160.10.10">
    <property type="entry name" value="Hexapeptide repeat proteins"/>
    <property type="match status" value="1"/>
</dbReference>
<dbReference type="Gene3D" id="3.90.550.10">
    <property type="entry name" value="Spore Coat Polysaccharide Biosynthesis Protein SpsA, Chain A"/>
    <property type="match status" value="1"/>
</dbReference>
<dbReference type="HAMAP" id="MF_01631">
    <property type="entry name" value="GlmU"/>
    <property type="match status" value="1"/>
</dbReference>
<dbReference type="InterPro" id="IPR005882">
    <property type="entry name" value="Bifunctional_GlmU"/>
</dbReference>
<dbReference type="InterPro" id="IPR050065">
    <property type="entry name" value="GlmU-like"/>
</dbReference>
<dbReference type="InterPro" id="IPR038009">
    <property type="entry name" value="GlmU_C_LbH"/>
</dbReference>
<dbReference type="InterPro" id="IPR001451">
    <property type="entry name" value="Hexapep"/>
</dbReference>
<dbReference type="InterPro" id="IPR018357">
    <property type="entry name" value="Hexapep_transf_CS"/>
</dbReference>
<dbReference type="InterPro" id="IPR025877">
    <property type="entry name" value="MobA-like_NTP_Trfase"/>
</dbReference>
<dbReference type="InterPro" id="IPR029044">
    <property type="entry name" value="Nucleotide-diphossugar_trans"/>
</dbReference>
<dbReference type="InterPro" id="IPR011004">
    <property type="entry name" value="Trimer_LpxA-like_sf"/>
</dbReference>
<dbReference type="NCBIfam" id="TIGR01173">
    <property type="entry name" value="glmU"/>
    <property type="match status" value="1"/>
</dbReference>
<dbReference type="NCBIfam" id="NF006986">
    <property type="entry name" value="PRK09451.1"/>
    <property type="match status" value="1"/>
</dbReference>
<dbReference type="PANTHER" id="PTHR43584:SF3">
    <property type="entry name" value="BIFUNCTIONAL PROTEIN GLMU"/>
    <property type="match status" value="1"/>
</dbReference>
<dbReference type="PANTHER" id="PTHR43584">
    <property type="entry name" value="NUCLEOTIDYL TRANSFERASE"/>
    <property type="match status" value="1"/>
</dbReference>
<dbReference type="Pfam" id="PF00132">
    <property type="entry name" value="Hexapep"/>
    <property type="match status" value="2"/>
</dbReference>
<dbReference type="Pfam" id="PF12804">
    <property type="entry name" value="NTP_transf_3"/>
    <property type="match status" value="1"/>
</dbReference>
<dbReference type="SUPFAM" id="SSF53448">
    <property type="entry name" value="Nucleotide-diphospho-sugar transferases"/>
    <property type="match status" value="1"/>
</dbReference>
<dbReference type="SUPFAM" id="SSF51161">
    <property type="entry name" value="Trimeric LpxA-like enzymes"/>
    <property type="match status" value="1"/>
</dbReference>
<dbReference type="PROSITE" id="PS00101">
    <property type="entry name" value="HEXAPEP_TRANSFERASES"/>
    <property type="match status" value="1"/>
</dbReference>
<protein>
    <recommendedName>
        <fullName evidence="1">Bifunctional protein GlmU</fullName>
    </recommendedName>
    <domain>
        <recommendedName>
            <fullName evidence="1">UDP-N-acetylglucosamine pyrophosphorylase</fullName>
            <ecNumber evidence="1">2.7.7.23</ecNumber>
        </recommendedName>
        <alternativeName>
            <fullName evidence="1">N-acetylglucosamine-1-phosphate uridyltransferase</fullName>
        </alternativeName>
    </domain>
    <domain>
        <recommendedName>
            <fullName evidence="1">Glucosamine-1-phosphate N-acetyltransferase</fullName>
            <ecNumber evidence="1">2.3.1.157</ecNumber>
        </recommendedName>
    </domain>
</protein>
<proteinExistence type="inferred from homology"/>
<keyword id="KW-0012">Acyltransferase</keyword>
<keyword id="KW-0133">Cell shape</keyword>
<keyword id="KW-0961">Cell wall biogenesis/degradation</keyword>
<keyword id="KW-0963">Cytoplasm</keyword>
<keyword id="KW-0460">Magnesium</keyword>
<keyword id="KW-0479">Metal-binding</keyword>
<keyword id="KW-0511">Multifunctional enzyme</keyword>
<keyword id="KW-0548">Nucleotidyltransferase</keyword>
<keyword id="KW-0573">Peptidoglycan synthesis</keyword>
<keyword id="KW-0677">Repeat</keyword>
<keyword id="KW-0808">Transferase</keyword>
<comment type="function">
    <text evidence="1">Catalyzes the last two sequential reactions in the de novo biosynthetic pathway for UDP-N-acetylglucosamine (UDP-GlcNAc). The C-terminal domain catalyzes the transfer of acetyl group from acetyl coenzyme A to glucosamine-1-phosphate (GlcN-1-P) to produce N-acetylglucosamine-1-phosphate (GlcNAc-1-P), which is converted into UDP-GlcNAc by the transfer of uridine 5-monophosphate (from uridine 5-triphosphate), a reaction catalyzed by the N-terminal domain.</text>
</comment>
<comment type="catalytic activity">
    <reaction evidence="1">
        <text>alpha-D-glucosamine 1-phosphate + acetyl-CoA = N-acetyl-alpha-D-glucosamine 1-phosphate + CoA + H(+)</text>
        <dbReference type="Rhea" id="RHEA:13725"/>
        <dbReference type="ChEBI" id="CHEBI:15378"/>
        <dbReference type="ChEBI" id="CHEBI:57287"/>
        <dbReference type="ChEBI" id="CHEBI:57288"/>
        <dbReference type="ChEBI" id="CHEBI:57776"/>
        <dbReference type="ChEBI" id="CHEBI:58516"/>
        <dbReference type="EC" id="2.3.1.157"/>
    </reaction>
</comment>
<comment type="catalytic activity">
    <reaction evidence="1">
        <text>N-acetyl-alpha-D-glucosamine 1-phosphate + UTP + H(+) = UDP-N-acetyl-alpha-D-glucosamine + diphosphate</text>
        <dbReference type="Rhea" id="RHEA:13509"/>
        <dbReference type="ChEBI" id="CHEBI:15378"/>
        <dbReference type="ChEBI" id="CHEBI:33019"/>
        <dbReference type="ChEBI" id="CHEBI:46398"/>
        <dbReference type="ChEBI" id="CHEBI:57705"/>
        <dbReference type="ChEBI" id="CHEBI:57776"/>
        <dbReference type="EC" id="2.7.7.23"/>
    </reaction>
</comment>
<comment type="cofactor">
    <cofactor evidence="1">
        <name>Mg(2+)</name>
        <dbReference type="ChEBI" id="CHEBI:18420"/>
    </cofactor>
    <text evidence="1">Binds 1 Mg(2+) ion per subunit.</text>
</comment>
<comment type="pathway">
    <text evidence="1">Nucleotide-sugar biosynthesis; UDP-N-acetyl-alpha-D-glucosamine biosynthesis; N-acetyl-alpha-D-glucosamine 1-phosphate from alpha-D-glucosamine 6-phosphate (route II): step 2/2.</text>
</comment>
<comment type="pathway">
    <text evidence="1">Nucleotide-sugar biosynthesis; UDP-N-acetyl-alpha-D-glucosamine biosynthesis; UDP-N-acetyl-alpha-D-glucosamine from N-acetyl-alpha-D-glucosamine 1-phosphate: step 1/1.</text>
</comment>
<comment type="pathway">
    <text evidence="1">Bacterial outer membrane biogenesis; LPS lipid A biosynthesis.</text>
</comment>
<comment type="subunit">
    <text evidence="1">Homotrimer.</text>
</comment>
<comment type="subcellular location">
    <subcellularLocation>
        <location evidence="1">Cytoplasm</location>
    </subcellularLocation>
</comment>
<comment type="similarity">
    <text evidence="1">In the N-terminal section; belongs to the N-acetylglucosamine-1-phosphate uridyltransferase family.</text>
</comment>
<comment type="similarity">
    <text evidence="1">In the C-terminal section; belongs to the transferase hexapeptide repeat family.</text>
</comment>
<accession>C6DJH5</accession>
<evidence type="ECO:0000255" key="1">
    <source>
        <dbReference type="HAMAP-Rule" id="MF_01631"/>
    </source>
</evidence>
<sequence length="456" mass="48907">MSNSAMSVVILAAGKGTRMYSDLPKVLHKLAGKPMVQHVIDAAMTTGAQHVHLVYGHGGDLLKHELTDPALNWVLQAEQLGTGHAMQQAAPYFADDEDILMLYGDVPLISSQTLGRLRQTKPQGGIGLLTVKLDDPTGYGRIVRENGAVVGIVEHKDASEEQRQINEINTGILIANGKDLKRWLSQLNNNNAQGEFYITDIIAMAAEEGQRVEAVHPERLSEVEGVNNRLQLSALERVYQREQADRLLLAGVMLLDPARFDLRGELTHGRDVVIDVNVVVEGNVKLGNRVKIGAGCVIKNSIIGDDCEISPYSVLEDAVLDAECTVGPFARLRPGSELAEGAHVGNFVELKKARLGKGSKAGHLSYLGDADIGSGVNIGAGTITCNYDGANKHKTVIGDDVFVGSDSQLVAPVSVANGATIGAGTTVTHDVAENELVVGRVKQRHISGWQRPVKKK</sequence>
<feature type="chain" id="PRO_1000215780" description="Bifunctional protein GlmU">
    <location>
        <begin position="1"/>
        <end position="456"/>
    </location>
</feature>
<feature type="region of interest" description="Pyrophosphorylase" evidence="1">
    <location>
        <begin position="1"/>
        <end position="229"/>
    </location>
</feature>
<feature type="region of interest" description="Linker" evidence="1">
    <location>
        <begin position="230"/>
        <end position="250"/>
    </location>
</feature>
<feature type="region of interest" description="N-acetyltransferase" evidence="1">
    <location>
        <begin position="251"/>
        <end position="456"/>
    </location>
</feature>
<feature type="active site" description="Proton acceptor" evidence="1">
    <location>
        <position position="363"/>
    </location>
</feature>
<feature type="binding site" evidence="1">
    <location>
        <begin position="11"/>
        <end position="14"/>
    </location>
    <ligand>
        <name>UDP-N-acetyl-alpha-D-glucosamine</name>
        <dbReference type="ChEBI" id="CHEBI:57705"/>
    </ligand>
</feature>
<feature type="binding site" evidence="1">
    <location>
        <position position="25"/>
    </location>
    <ligand>
        <name>UDP-N-acetyl-alpha-D-glucosamine</name>
        <dbReference type="ChEBI" id="CHEBI:57705"/>
    </ligand>
</feature>
<feature type="binding site" evidence="1">
    <location>
        <position position="76"/>
    </location>
    <ligand>
        <name>UDP-N-acetyl-alpha-D-glucosamine</name>
        <dbReference type="ChEBI" id="CHEBI:57705"/>
    </ligand>
</feature>
<feature type="binding site" evidence="1">
    <location>
        <begin position="81"/>
        <end position="82"/>
    </location>
    <ligand>
        <name>UDP-N-acetyl-alpha-D-glucosamine</name>
        <dbReference type="ChEBI" id="CHEBI:57705"/>
    </ligand>
</feature>
<feature type="binding site" evidence="1">
    <location>
        <begin position="103"/>
        <end position="105"/>
    </location>
    <ligand>
        <name>UDP-N-acetyl-alpha-D-glucosamine</name>
        <dbReference type="ChEBI" id="CHEBI:57705"/>
    </ligand>
</feature>
<feature type="binding site" evidence="1">
    <location>
        <position position="105"/>
    </location>
    <ligand>
        <name>Mg(2+)</name>
        <dbReference type="ChEBI" id="CHEBI:18420"/>
    </ligand>
</feature>
<feature type="binding site" evidence="1">
    <location>
        <position position="140"/>
    </location>
    <ligand>
        <name>UDP-N-acetyl-alpha-D-glucosamine</name>
        <dbReference type="ChEBI" id="CHEBI:57705"/>
    </ligand>
</feature>
<feature type="binding site" evidence="1">
    <location>
        <position position="154"/>
    </location>
    <ligand>
        <name>UDP-N-acetyl-alpha-D-glucosamine</name>
        <dbReference type="ChEBI" id="CHEBI:57705"/>
    </ligand>
</feature>
<feature type="binding site" evidence="1">
    <location>
        <position position="169"/>
    </location>
    <ligand>
        <name>UDP-N-acetyl-alpha-D-glucosamine</name>
        <dbReference type="ChEBI" id="CHEBI:57705"/>
    </ligand>
</feature>
<feature type="binding site" evidence="1">
    <location>
        <position position="227"/>
    </location>
    <ligand>
        <name>Mg(2+)</name>
        <dbReference type="ChEBI" id="CHEBI:18420"/>
    </ligand>
</feature>
<feature type="binding site" evidence="1">
    <location>
        <position position="227"/>
    </location>
    <ligand>
        <name>UDP-N-acetyl-alpha-D-glucosamine</name>
        <dbReference type="ChEBI" id="CHEBI:57705"/>
    </ligand>
</feature>
<feature type="binding site" evidence="1">
    <location>
        <position position="333"/>
    </location>
    <ligand>
        <name>UDP-N-acetyl-alpha-D-glucosamine</name>
        <dbReference type="ChEBI" id="CHEBI:57705"/>
    </ligand>
</feature>
<feature type="binding site" evidence="1">
    <location>
        <position position="351"/>
    </location>
    <ligand>
        <name>UDP-N-acetyl-alpha-D-glucosamine</name>
        <dbReference type="ChEBI" id="CHEBI:57705"/>
    </ligand>
</feature>
<feature type="binding site" evidence="1">
    <location>
        <position position="366"/>
    </location>
    <ligand>
        <name>UDP-N-acetyl-alpha-D-glucosamine</name>
        <dbReference type="ChEBI" id="CHEBI:57705"/>
    </ligand>
</feature>
<feature type="binding site" evidence="1">
    <location>
        <position position="377"/>
    </location>
    <ligand>
        <name>UDP-N-acetyl-alpha-D-glucosamine</name>
        <dbReference type="ChEBI" id="CHEBI:57705"/>
    </ligand>
</feature>
<feature type="binding site" evidence="1">
    <location>
        <position position="380"/>
    </location>
    <ligand>
        <name>acetyl-CoA</name>
        <dbReference type="ChEBI" id="CHEBI:57288"/>
    </ligand>
</feature>
<feature type="binding site" evidence="1">
    <location>
        <begin position="386"/>
        <end position="387"/>
    </location>
    <ligand>
        <name>acetyl-CoA</name>
        <dbReference type="ChEBI" id="CHEBI:57288"/>
    </ligand>
</feature>
<feature type="binding site" evidence="1">
    <location>
        <position position="405"/>
    </location>
    <ligand>
        <name>acetyl-CoA</name>
        <dbReference type="ChEBI" id="CHEBI:57288"/>
    </ligand>
</feature>
<feature type="binding site" evidence="1">
    <location>
        <position position="423"/>
    </location>
    <ligand>
        <name>acetyl-CoA</name>
        <dbReference type="ChEBI" id="CHEBI:57288"/>
    </ligand>
</feature>
<feature type="binding site" evidence="1">
    <location>
        <position position="440"/>
    </location>
    <ligand>
        <name>acetyl-CoA</name>
        <dbReference type="ChEBI" id="CHEBI:57288"/>
    </ligand>
</feature>
<gene>
    <name evidence="1" type="primary">glmU</name>
    <name type="ordered locus">PC1_4260</name>
</gene>
<name>GLMU_PECCP</name>
<reference key="1">
    <citation type="submission" date="2009-07" db="EMBL/GenBank/DDBJ databases">
        <title>Complete sequence of Pectobacterium carotovorum subsp. carotovorum PC1.</title>
        <authorList>
            <consortium name="US DOE Joint Genome Institute"/>
            <person name="Lucas S."/>
            <person name="Copeland A."/>
            <person name="Lapidus A."/>
            <person name="Glavina del Rio T."/>
            <person name="Tice H."/>
            <person name="Bruce D."/>
            <person name="Goodwin L."/>
            <person name="Pitluck S."/>
            <person name="Munk A.C."/>
            <person name="Brettin T."/>
            <person name="Detter J.C."/>
            <person name="Han C."/>
            <person name="Tapia R."/>
            <person name="Larimer F."/>
            <person name="Land M."/>
            <person name="Hauser L."/>
            <person name="Kyrpides N."/>
            <person name="Mikhailova N."/>
            <person name="Balakrishnan V."/>
            <person name="Glasner J."/>
            <person name="Perna N.T."/>
        </authorList>
    </citation>
    <scope>NUCLEOTIDE SEQUENCE [LARGE SCALE GENOMIC DNA]</scope>
    <source>
        <strain>PC1</strain>
    </source>
</reference>